<keyword id="KW-0121">Carboxypeptidase</keyword>
<keyword id="KW-1015">Disulfide bond</keyword>
<keyword id="KW-0325">Glycoprotein</keyword>
<keyword id="KW-0378">Hydrolase</keyword>
<keyword id="KW-0645">Protease</keyword>
<keyword id="KW-1185">Reference proteome</keyword>
<keyword id="KW-0964">Secreted</keyword>
<keyword id="KW-0732">Signal</keyword>
<accession>Q8S8K6</accession>
<comment type="function">
    <text evidence="1">Probable carboxypeptidase.</text>
</comment>
<comment type="subcellular location">
    <subcellularLocation>
        <location evidence="5">Secreted</location>
    </subcellularLocation>
</comment>
<comment type="tissue specificity">
    <text evidence="4">Expressed in seedlings, roots and senescent leaves.</text>
</comment>
<comment type="similarity">
    <text evidence="5">Belongs to the peptidase S10 family.</text>
</comment>
<comment type="sequence caution" evidence="5">
    <conflict type="erroneous initiation">
        <sequence resource="EMBL-CDS" id="AAM15112"/>
    </conflict>
</comment>
<comment type="sequence caution" evidence="5">
    <conflict type="frameshift">
        <sequence resource="EMBL" id="BX820274"/>
    </conflict>
</comment>
<sequence>MMITKKLYQCMCLLCMVIALLDVVSSDDAKEQKMKDKIISLPGQPPNLNFSQFSGYVTVDPAAGRALFYWLTEAPRPSGTKPLVLWLNGGPGCSSIAYGASEEVGPFRVNPDGKTLRLNLYAWNKVANVLFLDSPAGVGFSYTNTSSDELTVGDKRTGEDAYRFLVRWLERFPEYKERAFYIAGESYAGHYIPELAQLIVNRNKGAKNPTINLKGILMGNPLVDDYNDNKGMRDYWWNHGLISDESYNDLTKWCLNDSILFPKLNCNAALNQALSEFGDIDPYNINSPACTTHASSNEWMQAWRYRGNDECVVGYTRKYMNDPNVHKSFHARLNGSTPWTPCSRVIRKNWKDSPKSMLPIIKNLLQAHLRIWIFSGDSDAVLPLSGTRHSINAMKLKSSKRWYPWYHSHGLVGGWSQVYEDGLLTYTTVRAAGHEVPLSQPRLALFLFTHFLANHSLPSSPS</sequence>
<gene>
    <name type="primary">SCPL28</name>
    <name type="ordered locus">At2g35770</name>
    <name type="ORF">T20F21.4</name>
</gene>
<protein>
    <recommendedName>
        <fullName>Serine carboxypeptidase-like 28</fullName>
        <ecNumber>3.4.16.-</ecNumber>
    </recommendedName>
</protein>
<name>SCP28_ARATH</name>
<reference key="1">
    <citation type="journal article" date="1999" name="Nature">
        <title>Sequence and analysis of chromosome 2 of the plant Arabidopsis thaliana.</title>
        <authorList>
            <person name="Lin X."/>
            <person name="Kaul S."/>
            <person name="Rounsley S.D."/>
            <person name="Shea T.P."/>
            <person name="Benito M.-I."/>
            <person name="Town C.D."/>
            <person name="Fujii C.Y."/>
            <person name="Mason T.M."/>
            <person name="Bowman C.L."/>
            <person name="Barnstead M.E."/>
            <person name="Feldblyum T.V."/>
            <person name="Buell C.R."/>
            <person name="Ketchum K.A."/>
            <person name="Lee J.J."/>
            <person name="Ronning C.M."/>
            <person name="Koo H.L."/>
            <person name="Moffat K.S."/>
            <person name="Cronin L.A."/>
            <person name="Shen M."/>
            <person name="Pai G."/>
            <person name="Van Aken S."/>
            <person name="Umayam L."/>
            <person name="Tallon L.J."/>
            <person name="Gill J.E."/>
            <person name="Adams M.D."/>
            <person name="Carrera A.J."/>
            <person name="Creasy T.H."/>
            <person name="Goodman H.M."/>
            <person name="Somerville C.R."/>
            <person name="Copenhaver G.P."/>
            <person name="Preuss D."/>
            <person name="Nierman W.C."/>
            <person name="White O."/>
            <person name="Eisen J.A."/>
            <person name="Salzberg S.L."/>
            <person name="Fraser C.M."/>
            <person name="Venter J.C."/>
        </authorList>
    </citation>
    <scope>NUCLEOTIDE SEQUENCE [LARGE SCALE GENOMIC DNA]</scope>
    <source>
        <strain>cv. Columbia</strain>
    </source>
</reference>
<reference key="2">
    <citation type="journal article" date="2017" name="Plant J.">
        <title>Araport11: a complete reannotation of the Arabidopsis thaliana reference genome.</title>
        <authorList>
            <person name="Cheng C.Y."/>
            <person name="Krishnakumar V."/>
            <person name="Chan A.P."/>
            <person name="Thibaud-Nissen F."/>
            <person name="Schobel S."/>
            <person name="Town C.D."/>
        </authorList>
    </citation>
    <scope>GENOME REANNOTATION</scope>
    <source>
        <strain>cv. Columbia</strain>
    </source>
</reference>
<reference key="3">
    <citation type="journal article" date="2004" name="Genome Res.">
        <title>Whole genome sequence comparisons and 'full-length' cDNA sequences: a combined approach to evaluate and improve Arabidopsis genome annotation.</title>
        <authorList>
            <person name="Castelli V."/>
            <person name="Aury J.-M."/>
            <person name="Jaillon O."/>
            <person name="Wincker P."/>
            <person name="Clepet C."/>
            <person name="Menard M."/>
            <person name="Cruaud C."/>
            <person name="Quetier F."/>
            <person name="Scarpelli C."/>
            <person name="Schaechter V."/>
            <person name="Temple G."/>
            <person name="Caboche M."/>
            <person name="Weissenbach J."/>
            <person name="Salanoubat M."/>
        </authorList>
    </citation>
    <scope>NUCLEOTIDE SEQUENCE [LARGE SCALE MRNA]</scope>
    <source>
        <strain>cv. Columbia</strain>
    </source>
</reference>
<reference key="4">
    <citation type="journal article" date="2005" name="Plant Physiol.">
        <title>An expression and bioinformatics analysis of the Arabidopsis serine carboxypeptidase-like gene family.</title>
        <authorList>
            <person name="Fraser C.M."/>
            <person name="Rider L.W."/>
            <person name="Chapple C."/>
        </authorList>
    </citation>
    <scope>GENE FAMILY</scope>
    <scope>TISSUE SPECIFICITY</scope>
    <scope>NOMENCLATURE</scope>
</reference>
<feature type="signal peptide" evidence="2">
    <location>
        <begin position="1"/>
        <end position="26"/>
    </location>
</feature>
<feature type="chain" id="PRO_0000274643" description="Serine carboxypeptidase-like 28">
    <location>
        <begin position="27"/>
        <end position="462"/>
    </location>
</feature>
<feature type="active site" evidence="3">
    <location>
        <position position="186"/>
    </location>
</feature>
<feature type="active site" evidence="3">
    <location>
        <position position="379"/>
    </location>
</feature>
<feature type="active site" evidence="3">
    <location>
        <position position="434"/>
    </location>
</feature>
<feature type="glycosylation site" description="N-linked (GlcNAc...) asparagine" evidence="2">
    <location>
        <position position="49"/>
    </location>
</feature>
<feature type="glycosylation site" description="N-linked (GlcNAc...) asparagine" evidence="2">
    <location>
        <position position="144"/>
    </location>
</feature>
<feature type="glycosylation site" description="N-linked (GlcNAc...) asparagine" evidence="2">
    <location>
        <position position="256"/>
    </location>
</feature>
<feature type="glycosylation site" description="N-linked (GlcNAc...) asparagine" evidence="2">
    <location>
        <position position="334"/>
    </location>
</feature>
<feature type="glycosylation site" description="N-linked (GlcNAc...) asparagine" evidence="2">
    <location>
        <position position="454"/>
    </location>
</feature>
<feature type="disulfide bond" evidence="1">
    <location>
        <begin position="93"/>
        <end position="342"/>
    </location>
</feature>
<feature type="disulfide bond" evidence="1">
    <location>
        <begin position="254"/>
        <end position="266"/>
    </location>
</feature>
<feature type="disulfide bond" evidence="1">
    <location>
        <begin position="290"/>
        <end position="311"/>
    </location>
</feature>
<feature type="sequence conflict" description="In Ref. 3; BX820274." evidence="5" ref="3">
    <original>H</original>
    <variation>N</variation>
    <location>
        <position position="239"/>
    </location>
</feature>
<feature type="sequence conflict" description="In Ref. 3; BX820274." evidence="5" ref="3">
    <original>Y</original>
    <variation>H</variation>
    <location>
        <position position="283"/>
    </location>
</feature>
<feature type="sequence conflict" description="In Ref. 3; BX820274." evidence="5" ref="3">
    <original>C</original>
    <variation>R</variation>
    <location>
        <position position="342"/>
    </location>
</feature>
<feature type="sequence conflict" description="In Ref. 3; BX820274." evidence="5" ref="3">
    <original>H</original>
    <variation>N</variation>
    <location>
        <position position="455"/>
    </location>
</feature>
<organism>
    <name type="scientific">Arabidopsis thaliana</name>
    <name type="common">Mouse-ear cress</name>
    <dbReference type="NCBI Taxonomy" id="3702"/>
    <lineage>
        <taxon>Eukaryota</taxon>
        <taxon>Viridiplantae</taxon>
        <taxon>Streptophyta</taxon>
        <taxon>Embryophyta</taxon>
        <taxon>Tracheophyta</taxon>
        <taxon>Spermatophyta</taxon>
        <taxon>Magnoliopsida</taxon>
        <taxon>eudicotyledons</taxon>
        <taxon>Gunneridae</taxon>
        <taxon>Pentapetalae</taxon>
        <taxon>rosids</taxon>
        <taxon>malvids</taxon>
        <taxon>Brassicales</taxon>
        <taxon>Brassicaceae</taxon>
        <taxon>Camelineae</taxon>
        <taxon>Arabidopsis</taxon>
    </lineage>
</organism>
<evidence type="ECO:0000250" key="1"/>
<evidence type="ECO:0000255" key="2"/>
<evidence type="ECO:0000255" key="3">
    <source>
        <dbReference type="PROSITE-ProRule" id="PRU10074"/>
    </source>
</evidence>
<evidence type="ECO:0000269" key="4">
    <source>
    </source>
</evidence>
<evidence type="ECO:0000305" key="5"/>
<proteinExistence type="evidence at transcript level"/>
<dbReference type="EC" id="3.4.16.-"/>
<dbReference type="EMBL" id="AC006068">
    <property type="protein sequence ID" value="AAM15112.1"/>
    <property type="status" value="ALT_INIT"/>
    <property type="molecule type" value="Genomic_DNA"/>
</dbReference>
<dbReference type="EMBL" id="CP002685">
    <property type="protein sequence ID" value="AEC09159.1"/>
    <property type="molecule type" value="Genomic_DNA"/>
</dbReference>
<dbReference type="EMBL" id="BX820274">
    <property type="status" value="NOT_ANNOTATED_CDS"/>
    <property type="molecule type" value="mRNA"/>
</dbReference>
<dbReference type="PIR" id="G84772">
    <property type="entry name" value="G84772"/>
</dbReference>
<dbReference type="RefSeq" id="NP_181120.2">
    <property type="nucleotide sequence ID" value="NM_129135.3"/>
</dbReference>
<dbReference type="SMR" id="Q8S8K6"/>
<dbReference type="ESTHER" id="arath-SCP28">
    <property type="family name" value="Carboxypeptidase_S10"/>
</dbReference>
<dbReference type="MEROPS" id="S10.A28"/>
<dbReference type="GlyCosmos" id="Q8S8K6">
    <property type="glycosylation" value="5 sites, No reported glycans"/>
</dbReference>
<dbReference type="GlyGen" id="Q8S8K6">
    <property type="glycosylation" value="5 sites"/>
</dbReference>
<dbReference type="PaxDb" id="3702-AT2G35770.1"/>
<dbReference type="ProteomicsDB" id="232821"/>
<dbReference type="EnsemblPlants" id="AT2G35770.1">
    <property type="protein sequence ID" value="AT2G35770.1"/>
    <property type="gene ID" value="AT2G35770"/>
</dbReference>
<dbReference type="GeneID" id="818149"/>
<dbReference type="Gramene" id="AT2G35770.1">
    <property type="protein sequence ID" value="AT2G35770.1"/>
    <property type="gene ID" value="AT2G35770"/>
</dbReference>
<dbReference type="KEGG" id="ath:AT2G35770"/>
<dbReference type="Araport" id="AT2G35770"/>
<dbReference type="TAIR" id="AT2G35770">
    <property type="gene designation" value="SCPL28"/>
</dbReference>
<dbReference type="eggNOG" id="KOG1282">
    <property type="taxonomic scope" value="Eukaryota"/>
</dbReference>
<dbReference type="HOGENOM" id="CLU_008523_13_0_1"/>
<dbReference type="InParanoid" id="Q8S8K6"/>
<dbReference type="OMA" id="WRYRGND"/>
<dbReference type="PhylomeDB" id="Q8S8K6"/>
<dbReference type="PRO" id="PR:Q8S8K6"/>
<dbReference type="Proteomes" id="UP000006548">
    <property type="component" value="Chromosome 2"/>
</dbReference>
<dbReference type="ExpressionAtlas" id="Q8S8K6">
    <property type="expression patterns" value="baseline and differential"/>
</dbReference>
<dbReference type="GO" id="GO:0005576">
    <property type="term" value="C:extracellular region"/>
    <property type="evidence" value="ECO:0007669"/>
    <property type="project" value="UniProtKB-SubCell"/>
</dbReference>
<dbReference type="GO" id="GO:0004185">
    <property type="term" value="F:serine-type carboxypeptidase activity"/>
    <property type="evidence" value="ECO:0007669"/>
    <property type="project" value="InterPro"/>
</dbReference>
<dbReference type="GO" id="GO:0006508">
    <property type="term" value="P:proteolysis"/>
    <property type="evidence" value="ECO:0007669"/>
    <property type="project" value="UniProtKB-KW"/>
</dbReference>
<dbReference type="FunFam" id="3.40.50.11320:FF:000002">
    <property type="entry name" value="Carboxypeptidase"/>
    <property type="match status" value="1"/>
</dbReference>
<dbReference type="FunFam" id="3.40.50.1820:FF:000013">
    <property type="entry name" value="Carboxypeptidase"/>
    <property type="match status" value="1"/>
</dbReference>
<dbReference type="Gene3D" id="3.40.50.11320">
    <property type="match status" value="1"/>
</dbReference>
<dbReference type="Gene3D" id="6.10.250.940">
    <property type="match status" value="1"/>
</dbReference>
<dbReference type="Gene3D" id="3.40.50.1820">
    <property type="entry name" value="alpha/beta hydrolase"/>
    <property type="match status" value="1"/>
</dbReference>
<dbReference type="InterPro" id="IPR029058">
    <property type="entry name" value="AB_hydrolase_fold"/>
</dbReference>
<dbReference type="InterPro" id="IPR001563">
    <property type="entry name" value="Peptidase_S10"/>
</dbReference>
<dbReference type="InterPro" id="IPR018202">
    <property type="entry name" value="Ser_caboxypep_ser_AS"/>
</dbReference>
<dbReference type="PANTHER" id="PTHR11802:SF306">
    <property type="entry name" value="SERINE CARBOXYPEPTIDASE-LIKE 28"/>
    <property type="match status" value="1"/>
</dbReference>
<dbReference type="PANTHER" id="PTHR11802">
    <property type="entry name" value="SERINE PROTEASE FAMILY S10 SERINE CARBOXYPEPTIDASE"/>
    <property type="match status" value="1"/>
</dbReference>
<dbReference type="Pfam" id="PF00450">
    <property type="entry name" value="Peptidase_S10"/>
    <property type="match status" value="1"/>
</dbReference>
<dbReference type="PRINTS" id="PR00724">
    <property type="entry name" value="CRBOXYPTASEC"/>
</dbReference>
<dbReference type="SUPFAM" id="SSF53474">
    <property type="entry name" value="alpha/beta-Hydrolases"/>
    <property type="match status" value="1"/>
</dbReference>
<dbReference type="PROSITE" id="PS00131">
    <property type="entry name" value="CARBOXYPEPT_SER_SER"/>
    <property type="match status" value="1"/>
</dbReference>